<dbReference type="EMBL" id="AF105368">
    <property type="protein sequence ID" value="AAD16896.1"/>
    <property type="molecule type" value="mRNA"/>
</dbReference>
<dbReference type="RefSeq" id="NP_068620.1">
    <property type="nucleotide sequence ID" value="NM_021848.2"/>
</dbReference>
<dbReference type="SMR" id="Q9Z0W0"/>
<dbReference type="BioGRID" id="248832">
    <property type="interactions" value="1"/>
</dbReference>
<dbReference type="STRING" id="10116.ENSRNOP00000004946"/>
<dbReference type="BindingDB" id="Q9Z0W0"/>
<dbReference type="ChEMBL" id="CHEMBL3822349"/>
<dbReference type="DrugCentral" id="Q9Z0W0"/>
<dbReference type="GuidetoPHARMACOLOGY" id="250"/>
<dbReference type="GlyCosmos" id="Q9Z0W0">
    <property type="glycosylation" value="4 sites, No reported glycans"/>
</dbReference>
<dbReference type="GlyGen" id="Q9Z0W0">
    <property type="glycosylation" value="4 sites"/>
</dbReference>
<dbReference type="PhosphoSitePlus" id="Q9Z0W0"/>
<dbReference type="PaxDb" id="10116-ENSRNOP00000004946"/>
<dbReference type="Ensembl" id="ENSRNOT00000004946.6">
    <property type="protein sequence ID" value="ENSRNOP00000004946.4"/>
    <property type="gene ID" value="ENSRNOG00000003683.6"/>
</dbReference>
<dbReference type="GeneID" id="60432"/>
<dbReference type="KEGG" id="rno:60432"/>
<dbReference type="UCSC" id="RGD:620270">
    <property type="organism name" value="rat"/>
</dbReference>
<dbReference type="AGR" id="RGD:620270"/>
<dbReference type="CTD" id="9340"/>
<dbReference type="RGD" id="620270">
    <property type="gene designation" value="Glp2r"/>
</dbReference>
<dbReference type="eggNOG" id="KOG4564">
    <property type="taxonomic scope" value="Eukaryota"/>
</dbReference>
<dbReference type="GeneTree" id="ENSGT00940000158127"/>
<dbReference type="HOGENOM" id="CLU_002753_4_0_1"/>
<dbReference type="InParanoid" id="Q9Z0W0"/>
<dbReference type="OMA" id="SGVFCNG"/>
<dbReference type="OrthoDB" id="5967113at2759"/>
<dbReference type="PhylomeDB" id="Q9Z0W0"/>
<dbReference type="TreeFam" id="TF315710"/>
<dbReference type="Reactome" id="R-RNO-420092">
    <property type="pathway name" value="Glucagon-type ligand receptors"/>
</dbReference>
<dbReference type="PRO" id="PR:Q9Z0W0"/>
<dbReference type="Proteomes" id="UP000002494">
    <property type="component" value="Chromosome 10"/>
</dbReference>
<dbReference type="Bgee" id="ENSRNOG00000003683">
    <property type="expression patterns" value="Expressed in jejunum and 4 other cell types or tissues"/>
</dbReference>
<dbReference type="GO" id="GO:0005886">
    <property type="term" value="C:plasma membrane"/>
    <property type="evidence" value="ECO:0000318"/>
    <property type="project" value="GO_Central"/>
</dbReference>
<dbReference type="GO" id="GO:0004967">
    <property type="term" value="F:glucagon receptor activity"/>
    <property type="evidence" value="ECO:0000314"/>
    <property type="project" value="RGD"/>
</dbReference>
<dbReference type="GO" id="GO:0017046">
    <property type="term" value="F:peptide hormone binding"/>
    <property type="evidence" value="ECO:0000318"/>
    <property type="project" value="GO_Central"/>
</dbReference>
<dbReference type="GO" id="GO:0007188">
    <property type="term" value="P:adenylate cyclase-modulating G protein-coupled receptor signaling pathway"/>
    <property type="evidence" value="ECO:0000314"/>
    <property type="project" value="RGD"/>
</dbReference>
<dbReference type="GO" id="GO:0007166">
    <property type="term" value="P:cell surface receptor signaling pathway"/>
    <property type="evidence" value="ECO:0007669"/>
    <property type="project" value="InterPro"/>
</dbReference>
<dbReference type="CDD" id="cd15266">
    <property type="entry name" value="7tmB1_GLP2R"/>
    <property type="match status" value="1"/>
</dbReference>
<dbReference type="FunFam" id="1.20.1070.10:FF:000196">
    <property type="entry name" value="Glucagon like peptide 2 receptor"/>
    <property type="match status" value="1"/>
</dbReference>
<dbReference type="FunFam" id="4.10.1240.10:FF:000017">
    <property type="entry name" value="Glucagon like peptide 2 receptor"/>
    <property type="match status" value="1"/>
</dbReference>
<dbReference type="Gene3D" id="4.10.1240.10">
    <property type="entry name" value="GPCR, family 2, extracellular hormone receptor domain"/>
    <property type="match status" value="1"/>
</dbReference>
<dbReference type="Gene3D" id="1.20.1070.10">
    <property type="entry name" value="Rhodopsin 7-helix transmembrane proteins"/>
    <property type="match status" value="1"/>
</dbReference>
<dbReference type="InterPro" id="IPR039125">
    <property type="entry name" value="7tmB1_GLP2R"/>
</dbReference>
<dbReference type="InterPro" id="IPR050332">
    <property type="entry name" value="GPCR_2"/>
</dbReference>
<dbReference type="InterPro" id="IPR017981">
    <property type="entry name" value="GPCR_2-like_7TM"/>
</dbReference>
<dbReference type="InterPro" id="IPR036445">
    <property type="entry name" value="GPCR_2_extracell_dom_sf"/>
</dbReference>
<dbReference type="InterPro" id="IPR001879">
    <property type="entry name" value="GPCR_2_extracellular_dom"/>
</dbReference>
<dbReference type="InterPro" id="IPR000832">
    <property type="entry name" value="GPCR_2_secretin-like"/>
</dbReference>
<dbReference type="InterPro" id="IPR017983">
    <property type="entry name" value="GPCR_2_secretin-like_CS"/>
</dbReference>
<dbReference type="PANTHER" id="PTHR45620:SF23">
    <property type="entry name" value="GLUCAGON-LIKE PEPTIDE 2 RECEPTOR"/>
    <property type="match status" value="1"/>
</dbReference>
<dbReference type="PANTHER" id="PTHR45620">
    <property type="entry name" value="PDF RECEPTOR-LIKE PROTEIN-RELATED"/>
    <property type="match status" value="1"/>
</dbReference>
<dbReference type="Pfam" id="PF00002">
    <property type="entry name" value="7tm_2"/>
    <property type="match status" value="1"/>
</dbReference>
<dbReference type="Pfam" id="PF02793">
    <property type="entry name" value="HRM"/>
    <property type="match status" value="1"/>
</dbReference>
<dbReference type="PRINTS" id="PR00249">
    <property type="entry name" value="GPCRSECRETIN"/>
</dbReference>
<dbReference type="SMART" id="SM00008">
    <property type="entry name" value="HormR"/>
    <property type="match status" value="1"/>
</dbReference>
<dbReference type="SUPFAM" id="SSF81321">
    <property type="entry name" value="Family A G protein-coupled receptor-like"/>
    <property type="match status" value="1"/>
</dbReference>
<dbReference type="SUPFAM" id="SSF111418">
    <property type="entry name" value="Hormone receptor domain"/>
    <property type="match status" value="1"/>
</dbReference>
<dbReference type="PROSITE" id="PS00649">
    <property type="entry name" value="G_PROTEIN_RECEP_F2_1"/>
    <property type="match status" value="1"/>
</dbReference>
<dbReference type="PROSITE" id="PS50227">
    <property type="entry name" value="G_PROTEIN_RECEP_F2_3"/>
    <property type="match status" value="1"/>
</dbReference>
<dbReference type="PROSITE" id="PS50261">
    <property type="entry name" value="G_PROTEIN_RECEP_F2_4"/>
    <property type="match status" value="1"/>
</dbReference>
<gene>
    <name type="primary">Glp2r</name>
</gene>
<organism>
    <name type="scientific">Rattus norvegicus</name>
    <name type="common">Rat</name>
    <dbReference type="NCBI Taxonomy" id="10116"/>
    <lineage>
        <taxon>Eukaryota</taxon>
        <taxon>Metazoa</taxon>
        <taxon>Chordata</taxon>
        <taxon>Craniata</taxon>
        <taxon>Vertebrata</taxon>
        <taxon>Euteleostomi</taxon>
        <taxon>Mammalia</taxon>
        <taxon>Eutheria</taxon>
        <taxon>Euarchontoglires</taxon>
        <taxon>Glires</taxon>
        <taxon>Rodentia</taxon>
        <taxon>Myomorpha</taxon>
        <taxon>Muroidea</taxon>
        <taxon>Muridae</taxon>
        <taxon>Murinae</taxon>
        <taxon>Rattus</taxon>
    </lineage>
</organism>
<feature type="chain" id="PRO_0000012839" description="Glucagon-like peptide 2 receptor">
    <location>
        <begin position="1"/>
        <end position="550"/>
    </location>
</feature>
<feature type="topological domain" description="Extracellular" evidence="1">
    <location>
        <begin position="1"/>
        <end position="173"/>
    </location>
</feature>
<feature type="transmembrane region" description="Helical; Name=1" evidence="1">
    <location>
        <begin position="174"/>
        <end position="198"/>
    </location>
</feature>
<feature type="topological domain" description="Cytoplasmic" evidence="1">
    <location>
        <begin position="199"/>
        <end position="210"/>
    </location>
</feature>
<feature type="transmembrane region" description="Helical; Name=2" evidence="1">
    <location>
        <begin position="211"/>
        <end position="235"/>
    </location>
</feature>
<feature type="topological domain" description="Extracellular" evidence="1">
    <location>
        <begin position="236"/>
        <end position="261"/>
    </location>
</feature>
<feature type="transmembrane region" description="Helical; Name=3" evidence="1">
    <location>
        <begin position="262"/>
        <end position="285"/>
    </location>
</feature>
<feature type="topological domain" description="Cytoplasmic" evidence="1">
    <location>
        <begin position="286"/>
        <end position="299"/>
    </location>
</feature>
<feature type="transmembrane region" description="Helical; Name=4" evidence="1">
    <location>
        <begin position="300"/>
        <end position="321"/>
    </location>
</feature>
<feature type="topological domain" description="Extracellular" evidence="1">
    <location>
        <begin position="322"/>
        <end position="339"/>
    </location>
</feature>
<feature type="transmembrane region" description="Helical; Name=5" evidence="1">
    <location>
        <begin position="340"/>
        <end position="362"/>
    </location>
</feature>
<feature type="topological domain" description="Cytoplasmic" evidence="1">
    <location>
        <begin position="363"/>
        <end position="386"/>
    </location>
</feature>
<feature type="transmembrane region" description="Helical; Name=6" evidence="1">
    <location>
        <begin position="387"/>
        <end position="405"/>
    </location>
</feature>
<feature type="topological domain" description="Extracellular" evidence="1">
    <location>
        <begin position="406"/>
        <end position="417"/>
    </location>
</feature>
<feature type="transmembrane region" description="Helical; Name=7" evidence="1">
    <location>
        <begin position="418"/>
        <end position="438"/>
    </location>
</feature>
<feature type="topological domain" description="Cytoplasmic" evidence="1">
    <location>
        <begin position="439"/>
        <end position="550"/>
    </location>
</feature>
<feature type="glycosylation site" description="N-linked (GlcNAc...) asparagine" evidence="2">
    <location>
        <position position="97"/>
    </location>
</feature>
<feature type="glycosylation site" description="N-linked (GlcNAc...) asparagine" evidence="2">
    <location>
        <position position="113"/>
    </location>
</feature>
<feature type="glycosylation site" description="N-linked (GlcNAc...) asparagine" evidence="2">
    <location>
        <position position="148"/>
    </location>
</feature>
<feature type="glycosylation site" description="N-linked (GlcNAc...) asparagine" evidence="2">
    <location>
        <position position="162"/>
    </location>
</feature>
<feature type="disulfide bond" evidence="1">
    <location>
        <begin position="83"/>
        <end position="105"/>
    </location>
</feature>
<feature type="disulfide bond" evidence="1">
    <location>
        <begin position="96"/>
        <end position="137"/>
    </location>
</feature>
<feature type="disulfide bond" evidence="1">
    <location>
        <begin position="118"/>
        <end position="159"/>
    </location>
</feature>
<keyword id="KW-1003">Cell membrane</keyword>
<keyword id="KW-1015">Disulfide bond</keyword>
<keyword id="KW-0297">G-protein coupled receptor</keyword>
<keyword id="KW-0325">Glycoprotein</keyword>
<keyword id="KW-0472">Membrane</keyword>
<keyword id="KW-0675">Receptor</keyword>
<keyword id="KW-1185">Reference proteome</keyword>
<keyword id="KW-0807">Transducer</keyword>
<keyword id="KW-0812">Transmembrane</keyword>
<keyword id="KW-1133">Transmembrane helix</keyword>
<proteinExistence type="evidence at transcript level"/>
<accession>Q9Z0W0</accession>
<sequence>MRPQPSPAVPSRCREAPVPRVRAQPVGIPEAQGPVPLHSQQMRLLWGPGRPFLALLLLVSIKQVTGSLLKETTQKWANYKEKCLEDLHNRLSGIFCNGTFDRYVCWPHSYPGNVSVPCPSYLPWWNAESPGRAYRHCLAQGTWQTRENTTDIWQDESECSENHSFRQNVDHYALLYTLQLMYTVGYSVSLISLFLALTLFLFLRKLHCTRNYIHMNLFASFILKVLAVLVKDMVSHNSYSKRPDDESGWMSYLSETSVSCRSVQVLLHYFVGTNHLWLLVEGLYLHTLLEPTVFPERRLWPKYLVVGWAFPMLFVIPWGFARAHLENTRCWATNGNLKIWWIIRGPMLLCVTVNFFIFLKILKLLISKLKAHQMCFRDYKYRLAKSTLLLIPLLGVHEVLFTFFPDDQVQGFSKRIRLFIQLTLSSVHGFLVALQYGFANGEVKAELRKSWGRFLLARHWGCRTCVLGKNFRFLGKCSKKLSEGDGSETLQKLRFSTCSSHLASETLGDVGVQPHRGRGAWPRGSSLSESSEGDFTLANTMEEILEESEI</sequence>
<reference key="1">
    <citation type="journal article" date="1999" name="Proc. Natl. Acad. Sci. U.S.A.">
        <title>Prototypic G protein-coupled receptor for the intestinotrophic factor glucagon-like peptide 2.</title>
        <authorList>
            <person name="Munroe D.G."/>
            <person name="Gupta A.K."/>
            <person name="Kooshesh F."/>
            <person name="Vyas T.B."/>
            <person name="Rizkalla G."/>
            <person name="Wang H."/>
            <person name="Demchyshyn L."/>
            <person name="Yang Z.-H."/>
            <person name="Kamboj R.K."/>
            <person name="Chen H."/>
            <person name="McCallum K."/>
            <person name="Sumner-Smith M."/>
            <person name="Drucker D.J."/>
            <person name="Crivici A."/>
        </authorList>
    </citation>
    <scope>NUCLEOTIDE SEQUENCE [MRNA]</scope>
    <source>
        <strain>Sprague-Dawley</strain>
        <tissue>Hypothalamus</tissue>
    </source>
</reference>
<protein>
    <recommendedName>
        <fullName>Glucagon-like peptide 2 receptor</fullName>
        <shortName>GLP-2 receptor</shortName>
        <shortName>GLP-2-R</shortName>
        <shortName>GLP-2R</shortName>
    </recommendedName>
</protein>
<name>GLP2R_RAT</name>
<comment type="function">
    <text>This is a receptor for glucagon-like peptide 2. The activity of this receptor is mediated by G proteins which activate adenylyl cyclase.</text>
</comment>
<comment type="subcellular location">
    <subcellularLocation>
        <location>Cell membrane</location>
        <topology>Multi-pass membrane protein</topology>
    </subcellularLocation>
</comment>
<comment type="similarity">
    <text evidence="3">Belongs to the G-protein coupled receptor 2 family.</text>
</comment>
<evidence type="ECO:0000250" key="1"/>
<evidence type="ECO:0000255" key="2"/>
<evidence type="ECO:0000305" key="3"/>